<dbReference type="EC" id="1.7.1.13" evidence="1"/>
<dbReference type="EMBL" id="AM743169">
    <property type="protein sequence ID" value="CAQ47664.1"/>
    <property type="molecule type" value="Genomic_DNA"/>
</dbReference>
<dbReference type="RefSeq" id="WP_012481425.1">
    <property type="nucleotide sequence ID" value="NC_010943.1"/>
</dbReference>
<dbReference type="SMR" id="B2FJS1"/>
<dbReference type="EnsemblBacteria" id="CAQ47664">
    <property type="protein sequence ID" value="CAQ47664"/>
    <property type="gene ID" value="Smlt4277"/>
</dbReference>
<dbReference type="KEGG" id="sml:Smlt4277"/>
<dbReference type="eggNOG" id="COG0780">
    <property type="taxonomic scope" value="Bacteria"/>
</dbReference>
<dbReference type="eggNOG" id="COG2904">
    <property type="taxonomic scope" value="Bacteria"/>
</dbReference>
<dbReference type="HOGENOM" id="CLU_054738_0_0_6"/>
<dbReference type="UniPathway" id="UPA00392"/>
<dbReference type="Proteomes" id="UP000008840">
    <property type="component" value="Chromosome"/>
</dbReference>
<dbReference type="GO" id="GO:0005737">
    <property type="term" value="C:cytoplasm"/>
    <property type="evidence" value="ECO:0007669"/>
    <property type="project" value="UniProtKB-SubCell"/>
</dbReference>
<dbReference type="GO" id="GO:0033739">
    <property type="term" value="F:preQ1 synthase activity"/>
    <property type="evidence" value="ECO:0007669"/>
    <property type="project" value="UniProtKB-UniRule"/>
</dbReference>
<dbReference type="GO" id="GO:0008616">
    <property type="term" value="P:queuosine biosynthetic process"/>
    <property type="evidence" value="ECO:0007669"/>
    <property type="project" value="UniProtKB-UniRule"/>
</dbReference>
<dbReference type="GO" id="GO:0006400">
    <property type="term" value="P:tRNA modification"/>
    <property type="evidence" value="ECO:0007669"/>
    <property type="project" value="UniProtKB-UniRule"/>
</dbReference>
<dbReference type="Gene3D" id="3.30.1130.10">
    <property type="match status" value="2"/>
</dbReference>
<dbReference type="HAMAP" id="MF_00817">
    <property type="entry name" value="QueF_type2"/>
    <property type="match status" value="1"/>
</dbReference>
<dbReference type="InterPro" id="IPR043133">
    <property type="entry name" value="GTP-CH-I_C/QueF"/>
</dbReference>
<dbReference type="InterPro" id="IPR050084">
    <property type="entry name" value="NADPH_dep_7-cyano-7-deazaG_red"/>
</dbReference>
<dbReference type="InterPro" id="IPR029500">
    <property type="entry name" value="QueF"/>
</dbReference>
<dbReference type="InterPro" id="IPR029139">
    <property type="entry name" value="QueF_N"/>
</dbReference>
<dbReference type="InterPro" id="IPR016428">
    <property type="entry name" value="QueF_type2"/>
</dbReference>
<dbReference type="NCBIfam" id="TIGR03138">
    <property type="entry name" value="QueF"/>
    <property type="match status" value="1"/>
</dbReference>
<dbReference type="PANTHER" id="PTHR34354">
    <property type="entry name" value="NADPH-DEPENDENT 7-CYANO-7-DEAZAGUANINE REDUCTASE"/>
    <property type="match status" value="1"/>
</dbReference>
<dbReference type="PANTHER" id="PTHR34354:SF1">
    <property type="entry name" value="NADPH-DEPENDENT 7-CYANO-7-DEAZAGUANINE REDUCTASE"/>
    <property type="match status" value="1"/>
</dbReference>
<dbReference type="Pfam" id="PF14489">
    <property type="entry name" value="QueF"/>
    <property type="match status" value="1"/>
</dbReference>
<dbReference type="Pfam" id="PF14819">
    <property type="entry name" value="QueF_N"/>
    <property type="match status" value="1"/>
</dbReference>
<dbReference type="PIRSF" id="PIRSF004750">
    <property type="entry name" value="Nitrile_oxidored_YqcD_prd"/>
    <property type="match status" value="1"/>
</dbReference>
<dbReference type="SUPFAM" id="SSF55620">
    <property type="entry name" value="Tetrahydrobiopterin biosynthesis enzymes-like"/>
    <property type="match status" value="1"/>
</dbReference>
<accession>B2FJS1</accession>
<organism>
    <name type="scientific">Stenotrophomonas maltophilia (strain K279a)</name>
    <dbReference type="NCBI Taxonomy" id="522373"/>
    <lineage>
        <taxon>Bacteria</taxon>
        <taxon>Pseudomonadati</taxon>
        <taxon>Pseudomonadota</taxon>
        <taxon>Gammaproteobacteria</taxon>
        <taxon>Lysobacterales</taxon>
        <taxon>Lysobacteraceae</taxon>
        <taxon>Stenotrophomonas</taxon>
        <taxon>Stenotrophomonas maltophilia group</taxon>
    </lineage>
</organism>
<reference key="1">
    <citation type="journal article" date="2008" name="Genome Biol.">
        <title>The complete genome, comparative and functional analysis of Stenotrophomonas maltophilia reveals an organism heavily shielded by drug resistance determinants.</title>
        <authorList>
            <person name="Crossman L.C."/>
            <person name="Gould V.C."/>
            <person name="Dow J.M."/>
            <person name="Vernikos G.S."/>
            <person name="Okazaki A."/>
            <person name="Sebaihia M."/>
            <person name="Saunders D."/>
            <person name="Arrowsmith C."/>
            <person name="Carver T."/>
            <person name="Peters N."/>
            <person name="Adlem E."/>
            <person name="Kerhornou A."/>
            <person name="Lord A."/>
            <person name="Murphy L."/>
            <person name="Seeger K."/>
            <person name="Squares R."/>
            <person name="Rutter S."/>
            <person name="Quail M.A."/>
            <person name="Rajandream M.A."/>
            <person name="Harris D."/>
            <person name="Churcher C."/>
            <person name="Bentley S.D."/>
            <person name="Parkhill J."/>
            <person name="Thomson N.R."/>
            <person name="Avison M.B."/>
        </authorList>
    </citation>
    <scope>NUCLEOTIDE SEQUENCE [LARGE SCALE GENOMIC DNA]</scope>
    <source>
        <strain>K279a</strain>
    </source>
</reference>
<keyword id="KW-0963">Cytoplasm</keyword>
<keyword id="KW-0521">NADP</keyword>
<keyword id="KW-0560">Oxidoreductase</keyword>
<keyword id="KW-0671">Queuosine biosynthesis</keyword>
<keyword id="KW-1185">Reference proteome</keyword>
<name>QUEF_STRMK</name>
<gene>
    <name evidence="1" type="primary">queF</name>
    <name type="ordered locus">Smlt4277</name>
</gene>
<evidence type="ECO:0000255" key="1">
    <source>
        <dbReference type="HAMAP-Rule" id="MF_00817"/>
    </source>
</evidence>
<comment type="function">
    <text evidence="1">Catalyzes the NADPH-dependent reduction of 7-cyano-7-deazaguanine (preQ0) to 7-aminomethyl-7-deazaguanine (preQ1).</text>
</comment>
<comment type="catalytic activity">
    <reaction evidence="1">
        <text>7-aminomethyl-7-carbaguanine + 2 NADP(+) = 7-cyano-7-deazaguanine + 2 NADPH + 3 H(+)</text>
        <dbReference type="Rhea" id="RHEA:13409"/>
        <dbReference type="ChEBI" id="CHEBI:15378"/>
        <dbReference type="ChEBI" id="CHEBI:45075"/>
        <dbReference type="ChEBI" id="CHEBI:57783"/>
        <dbReference type="ChEBI" id="CHEBI:58349"/>
        <dbReference type="ChEBI" id="CHEBI:58703"/>
        <dbReference type="EC" id="1.7.1.13"/>
    </reaction>
</comment>
<comment type="pathway">
    <text evidence="1">tRNA modification; tRNA-queuosine biosynthesis.</text>
</comment>
<comment type="subunit">
    <text evidence="1">Homodimer.</text>
</comment>
<comment type="subcellular location">
    <subcellularLocation>
        <location evidence="1">Cytoplasm</location>
    </subcellularLocation>
</comment>
<comment type="similarity">
    <text evidence="1">Belongs to the GTP cyclohydrolase I family. QueF type 2 subfamily.</text>
</comment>
<proteinExistence type="inferred from homology"/>
<feature type="chain" id="PRO_1000134282" description="NADPH-dependent 7-cyano-7-deazaguanine reductase">
    <location>
        <begin position="1"/>
        <end position="272"/>
    </location>
</feature>
<feature type="active site" description="Thioimide intermediate" evidence="1">
    <location>
        <position position="178"/>
    </location>
</feature>
<feature type="active site" description="Proton donor" evidence="1">
    <location>
        <position position="185"/>
    </location>
</feature>
<feature type="binding site" evidence="1">
    <location>
        <begin position="82"/>
        <end position="84"/>
    </location>
    <ligand>
        <name>substrate</name>
    </ligand>
</feature>
<feature type="binding site" evidence="1">
    <location>
        <begin position="84"/>
        <end position="85"/>
    </location>
    <ligand>
        <name>NADPH</name>
        <dbReference type="ChEBI" id="CHEBI:57783"/>
    </ligand>
</feature>
<feature type="binding site" evidence="1">
    <location>
        <begin position="217"/>
        <end position="218"/>
    </location>
    <ligand>
        <name>substrate</name>
    </ligand>
</feature>
<feature type="binding site" evidence="1">
    <location>
        <begin position="246"/>
        <end position="247"/>
    </location>
    <ligand>
        <name>NADPH</name>
        <dbReference type="ChEBI" id="CHEBI:57783"/>
    </ligand>
</feature>
<protein>
    <recommendedName>
        <fullName evidence="1">NADPH-dependent 7-cyano-7-deazaguanine reductase</fullName>
        <ecNumber evidence="1">1.7.1.13</ecNumber>
    </recommendedName>
    <alternativeName>
        <fullName evidence="1">7-cyano-7-carbaguanine reductase</fullName>
    </alternativeName>
    <alternativeName>
        <fullName evidence="1">NADPH-dependent nitrile oxidoreductase</fullName>
    </alternativeName>
    <alternativeName>
        <fullName evidence="1">PreQ(0) reductase</fullName>
    </alternativeName>
</protein>
<sequence length="272" mass="30036">MNTPQDSSLGREVSYPSQYDPGLLFPIPRSGARAEIGLDDAALPFVGHDRWHAFELSWLDPRGKPQVAVATVQVPCTSPRLIESKSFKLYLNSLNSTRIDSAEALRARIVADLSDCAGAPVQVEFGLPGLRETPLGESIDGLELEIDCYGPPQADFLSANAGEVVEETLVSALLKSNCPVTGQPDWATVSLRYRGPKIDRAGLLRYLVSYREHAEFHEQCVERIFSEVSARCQPQWLEVEARYTRRGGLDINPWRASPGIAAPAATYRELRQ</sequence>